<evidence type="ECO:0000255" key="1">
    <source>
        <dbReference type="HAMAP-Rule" id="MF_00662"/>
    </source>
</evidence>
<evidence type="ECO:0000256" key="2">
    <source>
        <dbReference type="SAM" id="MobiDB-lite"/>
    </source>
</evidence>
<feature type="chain" id="PRO_0000029651" description="Phosphatidylserine decarboxylase beta chain" evidence="1">
    <location>
        <begin position="1"/>
        <end position="253"/>
    </location>
</feature>
<feature type="chain" id="PRO_0000029652" description="Phosphatidylserine decarboxylase alpha chain" evidence="1">
    <location>
        <begin position="254"/>
        <end position="322"/>
    </location>
</feature>
<feature type="region of interest" description="Disordered" evidence="2">
    <location>
        <begin position="293"/>
        <end position="322"/>
    </location>
</feature>
<feature type="compositionally biased region" description="Basic and acidic residues" evidence="2">
    <location>
        <begin position="308"/>
        <end position="322"/>
    </location>
</feature>
<feature type="active site" description="Charge relay system; for autoendoproteolytic cleavage activity" evidence="1">
    <location>
        <position position="90"/>
    </location>
</feature>
<feature type="active site" description="Charge relay system; for autoendoproteolytic cleavage activity" evidence="1">
    <location>
        <position position="147"/>
    </location>
</feature>
<feature type="active site" description="Charge relay system; for autoendoproteolytic cleavage activity" evidence="1">
    <location>
        <position position="254"/>
    </location>
</feature>
<feature type="active site" description="Schiff-base intermediate with substrate; via pyruvic acid; for decarboxylase activity" evidence="1">
    <location>
        <position position="254"/>
    </location>
</feature>
<feature type="site" description="Cleavage (non-hydrolytic); by autocatalysis" evidence="1">
    <location>
        <begin position="253"/>
        <end position="254"/>
    </location>
</feature>
<feature type="modified residue" description="Pyruvic acid (Ser); by autocatalysis" evidence="1">
    <location>
        <position position="254"/>
    </location>
</feature>
<sequence>MLNSFKLSLQYILPKLWLTRLAGWGASKRAGWLTKLVIDLFVKYYKVDMKEAQKPDTASYRTFNEFFVRPLRDEVRPIDTDPNVLVMPADGVISQLGKIEEDKILQAKGHNYSLEALLAGNYLMADLFRNGTFVTTYLSPRDYHRVHMPCNGILREMIYVPGDLFSVNHLTAQNVPNLFARNERVICLFDTEFGPMAQILVGATIVGSIETVWAGTITPPREGIIKRWTWPAGENDGSVALLKGQEMGRFKLGSTVINLFAPGKVNLVEQLESLSVTKIGQPLAVSTETFVTPDAEPAPLPAEEIEAEHDASPLVDDKKDQV</sequence>
<protein>
    <recommendedName>
        <fullName evidence="1">Phosphatidylserine decarboxylase proenzyme</fullName>
        <ecNumber evidence="1">4.1.1.65</ecNumber>
    </recommendedName>
    <component>
        <recommendedName>
            <fullName evidence="1">Phosphatidylserine decarboxylase alpha chain</fullName>
        </recommendedName>
    </component>
    <component>
        <recommendedName>
            <fullName evidence="1">Phosphatidylserine decarboxylase beta chain</fullName>
        </recommendedName>
    </component>
</protein>
<proteinExistence type="inferred from homology"/>
<comment type="function">
    <text evidence="1">Catalyzes the formation of phosphatidylethanolamine (PtdEtn) from phosphatidylserine (PtdSer).</text>
</comment>
<comment type="catalytic activity">
    <reaction evidence="1">
        <text>a 1,2-diacyl-sn-glycero-3-phospho-L-serine + H(+) = a 1,2-diacyl-sn-glycero-3-phosphoethanolamine + CO2</text>
        <dbReference type="Rhea" id="RHEA:20828"/>
        <dbReference type="ChEBI" id="CHEBI:15378"/>
        <dbReference type="ChEBI" id="CHEBI:16526"/>
        <dbReference type="ChEBI" id="CHEBI:57262"/>
        <dbReference type="ChEBI" id="CHEBI:64612"/>
        <dbReference type="EC" id="4.1.1.65"/>
    </reaction>
</comment>
<comment type="cofactor">
    <cofactor evidence="1">
        <name>pyruvate</name>
        <dbReference type="ChEBI" id="CHEBI:15361"/>
    </cofactor>
    <text evidence="1">Binds 1 pyruvoyl group covalently per subunit.</text>
</comment>
<comment type="pathway">
    <text evidence="1">Phospholipid metabolism; phosphatidylethanolamine biosynthesis; phosphatidylethanolamine from CDP-diacylglycerol: step 2/2.</text>
</comment>
<comment type="subunit">
    <text evidence="1">Heterodimer of a large membrane-associated beta subunit and a small pyruvoyl-containing alpha subunit.</text>
</comment>
<comment type="subcellular location">
    <subcellularLocation>
        <location evidence="1">Cell membrane</location>
        <topology evidence="1">Peripheral membrane protein</topology>
    </subcellularLocation>
</comment>
<comment type="PTM">
    <text evidence="1">Is synthesized initially as an inactive proenzyme. Formation of the active enzyme involves a self-maturation process in which the active site pyruvoyl group is generated from an internal serine residue via an autocatalytic post-translational modification. Two non-identical subunits are generated from the proenzyme in this reaction, and the pyruvate is formed at the N-terminus of the alpha chain, which is derived from the carboxyl end of the proenzyme. The autoendoproteolytic cleavage occurs by a canonical serine protease mechanism, in which the side chain hydroxyl group of the serine supplies its oxygen atom to form the C-terminus of the beta chain, while the remainder of the serine residue undergoes an oxidative deamination to produce ammonia and the pyruvoyl prosthetic group on the alpha chain. During this reaction, the Ser that is part of the protease active site of the proenzyme becomes the pyruvoyl prosthetic group, which constitutes an essential element of the active site of the mature decarboxylase.</text>
</comment>
<comment type="similarity">
    <text evidence="1">Belongs to the phosphatidylserine decarboxylase family. PSD-B subfamily. Prokaryotic type I sub-subfamily.</text>
</comment>
<keyword id="KW-1003">Cell membrane</keyword>
<keyword id="KW-0210">Decarboxylase</keyword>
<keyword id="KW-0444">Lipid biosynthesis</keyword>
<keyword id="KW-0443">Lipid metabolism</keyword>
<keyword id="KW-0456">Lyase</keyword>
<keyword id="KW-0472">Membrane</keyword>
<keyword id="KW-0594">Phospholipid biosynthesis</keyword>
<keyword id="KW-1208">Phospholipid metabolism</keyword>
<keyword id="KW-0670">Pyruvate</keyword>
<keyword id="KW-1185">Reference proteome</keyword>
<keyword id="KW-0865">Zymogen</keyword>
<organism>
    <name type="scientific">Escherichia coli O6:H1 (strain CFT073 / ATCC 700928 / UPEC)</name>
    <dbReference type="NCBI Taxonomy" id="199310"/>
    <lineage>
        <taxon>Bacteria</taxon>
        <taxon>Pseudomonadati</taxon>
        <taxon>Pseudomonadota</taxon>
        <taxon>Gammaproteobacteria</taxon>
        <taxon>Enterobacterales</taxon>
        <taxon>Enterobacteriaceae</taxon>
        <taxon>Escherichia</taxon>
    </lineage>
</organism>
<name>PSD_ECOL6</name>
<gene>
    <name evidence="1" type="primary">psd</name>
    <name type="ordered locus">c5247</name>
</gene>
<reference key="1">
    <citation type="journal article" date="2002" name="Proc. Natl. Acad. Sci. U.S.A.">
        <title>Extensive mosaic structure revealed by the complete genome sequence of uropathogenic Escherichia coli.</title>
        <authorList>
            <person name="Welch R.A."/>
            <person name="Burland V."/>
            <person name="Plunkett G. III"/>
            <person name="Redford P."/>
            <person name="Roesch P."/>
            <person name="Rasko D."/>
            <person name="Buckles E.L."/>
            <person name="Liou S.-R."/>
            <person name="Boutin A."/>
            <person name="Hackett J."/>
            <person name="Stroud D."/>
            <person name="Mayhew G.F."/>
            <person name="Rose D.J."/>
            <person name="Zhou S."/>
            <person name="Schwartz D.C."/>
            <person name="Perna N.T."/>
            <person name="Mobley H.L.T."/>
            <person name="Donnenberg M.S."/>
            <person name="Blattner F.R."/>
        </authorList>
    </citation>
    <scope>NUCLEOTIDE SEQUENCE [LARGE SCALE GENOMIC DNA]</scope>
    <source>
        <strain>CFT073 / ATCC 700928 / UPEC</strain>
    </source>
</reference>
<dbReference type="EC" id="4.1.1.65" evidence="1"/>
<dbReference type="EMBL" id="AE014075">
    <property type="protein sequence ID" value="AAN83669.1"/>
    <property type="molecule type" value="Genomic_DNA"/>
</dbReference>
<dbReference type="SMR" id="P0A8K2"/>
<dbReference type="STRING" id="199310.c5247"/>
<dbReference type="KEGG" id="ecc:c5247"/>
<dbReference type="eggNOG" id="COG0688">
    <property type="taxonomic scope" value="Bacteria"/>
</dbReference>
<dbReference type="HOGENOM" id="CLU_029061_4_1_6"/>
<dbReference type="BioCyc" id="ECOL199310:C5247-MONOMER"/>
<dbReference type="UniPathway" id="UPA00558">
    <property type="reaction ID" value="UER00616"/>
</dbReference>
<dbReference type="Proteomes" id="UP000001410">
    <property type="component" value="Chromosome"/>
</dbReference>
<dbReference type="GO" id="GO:0005886">
    <property type="term" value="C:plasma membrane"/>
    <property type="evidence" value="ECO:0007669"/>
    <property type="project" value="UniProtKB-SubCell"/>
</dbReference>
<dbReference type="GO" id="GO:0004609">
    <property type="term" value="F:phosphatidylserine decarboxylase activity"/>
    <property type="evidence" value="ECO:0007669"/>
    <property type="project" value="UniProtKB-UniRule"/>
</dbReference>
<dbReference type="GO" id="GO:0006646">
    <property type="term" value="P:phosphatidylethanolamine biosynthetic process"/>
    <property type="evidence" value="ECO:0007669"/>
    <property type="project" value="UniProtKB-UniRule"/>
</dbReference>
<dbReference type="HAMAP" id="MF_00662">
    <property type="entry name" value="PS_decarb_PSD_B_type1"/>
    <property type="match status" value="1"/>
</dbReference>
<dbReference type="InterPro" id="IPR003817">
    <property type="entry name" value="PS_Dcarbxylase"/>
</dbReference>
<dbReference type="InterPro" id="IPR033177">
    <property type="entry name" value="PSD-B"/>
</dbReference>
<dbReference type="InterPro" id="IPR033178">
    <property type="entry name" value="PSD_type1_pro"/>
</dbReference>
<dbReference type="NCBIfam" id="TIGR00163">
    <property type="entry name" value="PS_decarb"/>
    <property type="match status" value="1"/>
</dbReference>
<dbReference type="PANTHER" id="PTHR10067">
    <property type="entry name" value="PHOSPHATIDYLSERINE DECARBOXYLASE"/>
    <property type="match status" value="1"/>
</dbReference>
<dbReference type="PANTHER" id="PTHR10067:SF6">
    <property type="entry name" value="PHOSPHATIDYLSERINE DECARBOXYLASE PROENZYME, MITOCHONDRIAL"/>
    <property type="match status" value="1"/>
</dbReference>
<dbReference type="Pfam" id="PF02666">
    <property type="entry name" value="PS_Dcarbxylase"/>
    <property type="match status" value="1"/>
</dbReference>
<accession>P0A8K2</accession>
<accession>P10740</accession>